<organism>
    <name type="scientific">Homo sapiens</name>
    <name type="common">Human</name>
    <dbReference type="NCBI Taxonomy" id="9606"/>
    <lineage>
        <taxon>Eukaryota</taxon>
        <taxon>Metazoa</taxon>
        <taxon>Chordata</taxon>
        <taxon>Craniata</taxon>
        <taxon>Vertebrata</taxon>
        <taxon>Euteleostomi</taxon>
        <taxon>Mammalia</taxon>
        <taxon>Eutheria</taxon>
        <taxon>Euarchontoglires</taxon>
        <taxon>Primates</taxon>
        <taxon>Haplorrhini</taxon>
        <taxon>Catarrhini</taxon>
        <taxon>Hominidae</taxon>
        <taxon>Homo</taxon>
    </lineage>
</organism>
<feature type="chain" id="PRO_0000280353" description="Photoreceptor disk component PRCD" evidence="3">
    <location>
        <begin position="1"/>
        <end position="54"/>
    </location>
</feature>
<feature type="region of interest" description="Disordered" evidence="4">
    <location>
        <begin position="25"/>
        <end position="54"/>
    </location>
</feature>
<feature type="lipid moiety-binding region" description="S-palmitoyl cysteine" evidence="7">
    <location>
        <position position="2"/>
    </location>
</feature>
<feature type="sequence variant" id="VAR_031122" description="In RP36; loss of palmitoylation; reduced protein stability; fails to localize to the photoreceptor outer segment; dbSNP:rs121918369." evidence="5 6">
    <original>C</original>
    <variation>Y</variation>
    <location>
        <position position="2"/>
    </location>
</feature>
<feature type="sequence variant" id="VAR_031123" description="In dbSNP:rs375181336." evidence="5">
    <original>R</original>
    <variation>C</variation>
    <location>
        <position position="17"/>
    </location>
</feature>
<feature type="sequence variant" id="VAR_078540" description="In RP36; no effect on protein level." evidence="6">
    <original>P</original>
    <variation>T</variation>
    <location>
        <position position="25"/>
    </location>
</feature>
<feature type="sequence variant" id="VAR_031124" description="In RP36; uncertain significance; no effect on protein stability; dbSNP:rs767439982." evidence="5 7">
    <original>V</original>
    <variation>M</variation>
    <location>
        <position position="30"/>
    </location>
</feature>
<accession>Q00LT1</accession>
<accession>B9EJD4</accession>
<comment type="function">
    <text evidence="5 6">Involved in vision.</text>
</comment>
<comment type="subunit">
    <text evidence="2">Interacts with RHO/rhodopsin; the interaction promotes PRCD stability.</text>
</comment>
<comment type="subcellular location">
    <subcellularLocation>
        <location evidence="7">Cell projection</location>
        <location evidence="7">Cilium</location>
        <location evidence="7">Photoreceptor outer segment</location>
    </subcellularLocation>
    <subcellularLocation>
        <location evidence="7">Membrane</location>
        <topology evidence="7">Lipid-anchor</topology>
        <orientation evidence="2">Cytoplasmic side</orientation>
    </subcellularLocation>
    <subcellularLocation>
        <location evidence="6">Endoplasmic reticulum</location>
    </subcellularLocation>
    <subcellularLocation>
        <location evidence="6">Golgi apparatus</location>
    </subcellularLocation>
    <text evidence="6 7">Localizes to photoreceptor disk membranes in the photoreceptor outer segment (PubMed:27613864). The secretion in media described in PubMed:24992209 is probably an experimental artifact (PubMed:24992209).</text>
</comment>
<comment type="PTM">
    <text evidence="7">Palmitoylated at Cys-2 (PubMed:27613864). Palmitoylation is essential for protein stability and trafficking to the photoreceptor outer segment, but does not appear to be essential for membrane localization (PubMed:27613864). Probably palmitoylated by ZDHHC3 (PubMed:27613864).</text>
</comment>
<comment type="PTM">
    <text evidence="1">Phosphorylated.</text>
</comment>
<comment type="disease" evidence="5 6 7">
    <disease id="DI-02263">
        <name>Retinitis pigmentosa 36</name>
        <acronym>RP36</acronym>
        <description>A retinal dystrophy belonging to the group of pigmentary retinopathies. Retinitis pigmentosa is characterized by retinal pigment deposits visible on fundus examination and primary loss of rod photoreceptor cells followed by secondary loss of cone photoreceptors. Patients typically have night vision blindness and loss of midperipheral visual field. As their condition progresses, they lose their far peripheral visual field and eventually central vision as well.</description>
        <dbReference type="MIM" id="610599"/>
    </disease>
    <text>The disease is caused by variants affecting the gene represented in this entry.</text>
</comment>
<comment type="similarity">
    <text evidence="10">Belongs to the PRCD family.</text>
</comment>
<evidence type="ECO:0000250" key="1">
    <source>
        <dbReference type="UniProtKB" id="E1B7R9"/>
    </source>
</evidence>
<evidence type="ECO:0000250" key="2">
    <source>
        <dbReference type="UniProtKB" id="Q00LT2"/>
    </source>
</evidence>
<evidence type="ECO:0000255" key="3"/>
<evidence type="ECO:0000256" key="4">
    <source>
        <dbReference type="SAM" id="MobiDB-lite"/>
    </source>
</evidence>
<evidence type="ECO:0000269" key="5">
    <source>
    </source>
</evidence>
<evidence type="ECO:0000269" key="6">
    <source>
    </source>
</evidence>
<evidence type="ECO:0000269" key="7">
    <source>
    </source>
</evidence>
<evidence type="ECO:0000303" key="8">
    <source>
    </source>
</evidence>
<evidence type="ECO:0000303" key="9">
    <source>
    </source>
</evidence>
<evidence type="ECO:0000305" key="10"/>
<evidence type="ECO:0000312" key="11">
    <source>
        <dbReference type="HGNC" id="HGNC:32528"/>
    </source>
</evidence>
<proteinExistence type="evidence at protein level"/>
<sequence>MCTTLFLLSTLAMLWRRRFANRVQPEPSDVDGAARGSSLDADPQSSGREKEPLK</sequence>
<name>PRCD_HUMAN</name>
<protein>
    <recommendedName>
        <fullName evidence="11">Photoreceptor disk component PRCD</fullName>
    </recommendedName>
    <alternativeName>
        <fullName evidence="8 9">Progressive rod-cone degeneration protein</fullName>
    </alternativeName>
</protein>
<keyword id="KW-0966">Cell projection</keyword>
<keyword id="KW-0225">Disease variant</keyword>
<keyword id="KW-0256">Endoplasmic reticulum</keyword>
<keyword id="KW-0333">Golgi apparatus</keyword>
<keyword id="KW-0449">Lipoprotein</keyword>
<keyword id="KW-0472">Membrane</keyword>
<keyword id="KW-0564">Palmitate</keyword>
<keyword id="KW-0597">Phosphoprotein</keyword>
<keyword id="KW-1185">Reference proteome</keyword>
<keyword id="KW-0682">Retinitis pigmentosa</keyword>
<keyword id="KW-0716">Sensory transduction</keyword>
<keyword id="KW-0844">Vision</keyword>
<reference key="1">
    <citation type="journal article" date="2006" name="Genomics">
        <title>Identical mutation in a novel retinal gene causes progressive rod-cone degeneration in dogs and retinitis pigmentosa in humans.</title>
        <authorList>
            <person name="Zangerl B."/>
            <person name="Goldstein O."/>
            <person name="Philp A.R."/>
            <person name="Lindauer S.J.P."/>
            <person name="Pearce-Kelling S.E."/>
            <person name="Mullins R.F."/>
            <person name="Graphodatsky A.S."/>
            <person name="Ripoll D."/>
            <person name="Felix J.S."/>
            <person name="Stone E.M."/>
            <person name="Acland G.M."/>
            <person name="Aguirre G.D."/>
        </authorList>
    </citation>
    <scope>NUCLEOTIDE SEQUENCE [MRNA]</scope>
    <scope>FUNCTION</scope>
    <scope>SUBCELLULAR LOCATION</scope>
    <scope>VARIANTS RP36 TYR-2 AND MET-30</scope>
    <scope>VARIANT CYS-17</scope>
    <scope>INVOLVEMENT IN RP36</scope>
</reference>
<reference key="2">
    <citation type="journal article" date="2004" name="Genome Res.">
        <title>The status, quality, and expansion of the NIH full-length cDNA project: the Mammalian Gene Collection (MGC).</title>
        <authorList>
            <consortium name="The MGC Project Team"/>
        </authorList>
    </citation>
    <scope>NUCLEOTIDE SEQUENCE [LARGE SCALE MRNA]</scope>
    <source>
        <tissue>Brain</tissue>
    </source>
</reference>
<reference key="3">
    <citation type="journal article" date="2014" name="Exp. Eye Res.">
        <title>The progressive rod-cone degeneration (PRCD) protein is secreted through the conventional ER/Golgi-dependent pathway.</title>
        <authorList>
            <person name="Remez L."/>
            <person name="Zobor D."/>
            <person name="Kohl S."/>
            <person name="Ben-Yosef T."/>
        </authorList>
    </citation>
    <scope>FUNCTION</scope>
    <scope>SUBCELLULAR LOCATION</scope>
    <scope>PALMITOYLATION</scope>
    <scope>VARIANTS RP36 TYR-2 AND THR-25</scope>
    <scope>CHARACTERIZATION OF VARIANTS RP36 TYR-2 AND THR-25</scope>
</reference>
<reference key="4">
    <citation type="journal article" date="2016" name="J. Biol. Chem.">
        <title>Palmitoylation of Progressive Rod-Cone Degeneration (PRCD) Regulates Protein Stability and Localization.</title>
        <authorList>
            <person name="Murphy J."/>
            <person name="Kolandaivelu S."/>
        </authorList>
    </citation>
    <scope>SUBCELLULAR LOCATION</scope>
    <scope>PALMITOYLATION AT CYS-2</scope>
    <scope>CHARACTERIZATION OF VARIANTS RP36 TYR-2 AND MET-30</scope>
</reference>
<gene>
    <name evidence="11" type="primary">PRCD</name>
</gene>
<dbReference type="EMBL" id="DQ390338">
    <property type="protein sequence ID" value="ABD17429.1"/>
    <property type="molecule type" value="mRNA"/>
</dbReference>
<dbReference type="EMBL" id="BC146898">
    <property type="protein sequence ID" value="AAI46899.1"/>
    <property type="molecule type" value="mRNA"/>
</dbReference>
<dbReference type="EMBL" id="BC146904">
    <property type="protein sequence ID" value="AAI46905.1"/>
    <property type="molecule type" value="mRNA"/>
</dbReference>
<dbReference type="CCDS" id="CCDS42382.1"/>
<dbReference type="RefSeq" id="NP_001071088.1">
    <property type="nucleotide sequence ID" value="NM_001077620.3"/>
</dbReference>
<dbReference type="RefSeq" id="XP_016880502.1">
    <property type="nucleotide sequence ID" value="XM_017025013.2"/>
</dbReference>
<dbReference type="RefSeq" id="XP_016880503.1">
    <property type="nucleotide sequence ID" value="XM_017025014.2"/>
</dbReference>
<dbReference type="RefSeq" id="XP_016880504.1">
    <property type="nucleotide sequence ID" value="XM_017025015.2"/>
</dbReference>
<dbReference type="RefSeq" id="XP_047292613.1">
    <property type="nucleotide sequence ID" value="XM_047436657.1"/>
</dbReference>
<dbReference type="RefSeq" id="XP_047292614.1">
    <property type="nucleotide sequence ID" value="XM_047436658.1"/>
</dbReference>
<dbReference type="RefSeq" id="XP_047292615.1">
    <property type="nucleotide sequence ID" value="XM_047436659.1"/>
</dbReference>
<dbReference type="RefSeq" id="XP_054173041.1">
    <property type="nucleotide sequence ID" value="XM_054317066.1"/>
</dbReference>
<dbReference type="RefSeq" id="XP_054173042.1">
    <property type="nucleotide sequence ID" value="XM_054317067.1"/>
</dbReference>
<dbReference type="RefSeq" id="XP_054173043.1">
    <property type="nucleotide sequence ID" value="XM_054317068.1"/>
</dbReference>
<dbReference type="BioGRID" id="612840">
    <property type="interactions" value="1"/>
</dbReference>
<dbReference type="FunCoup" id="Q00LT1">
    <property type="interactions" value="25"/>
</dbReference>
<dbReference type="STRING" id="9606.ENSP00000467661"/>
<dbReference type="iPTMnet" id="Q00LT1"/>
<dbReference type="PhosphoSitePlus" id="Q00LT1"/>
<dbReference type="SwissPalm" id="Q00LT1"/>
<dbReference type="BioMuta" id="PRCD"/>
<dbReference type="DMDM" id="121939885"/>
<dbReference type="MassIVE" id="Q00LT1"/>
<dbReference type="PaxDb" id="9606-ENSP00000465932"/>
<dbReference type="ProteomicsDB" id="57903"/>
<dbReference type="Antibodypedia" id="64642">
    <property type="antibodies" value="3 antibodies from 3 providers"/>
</dbReference>
<dbReference type="DNASU" id="768206"/>
<dbReference type="Ensembl" id="ENST00000586148.1">
    <property type="protein sequence ID" value="ENSP00000465932.1"/>
    <property type="gene ID" value="ENSG00000214140.11"/>
</dbReference>
<dbReference type="Ensembl" id="ENST00000592014.6">
    <property type="protein sequence ID" value="ENSP00000467661.1"/>
    <property type="gene ID" value="ENSG00000214140.11"/>
</dbReference>
<dbReference type="GeneID" id="768206"/>
<dbReference type="KEGG" id="hsa:768206"/>
<dbReference type="MANE-Select" id="ENST00000592014.6">
    <property type="protein sequence ID" value="ENSP00000467661.1"/>
    <property type="RefSeq nucleotide sequence ID" value="NM_001077620.3"/>
    <property type="RefSeq protein sequence ID" value="NP_001071088.1"/>
</dbReference>
<dbReference type="UCSC" id="uc002jrx.3">
    <property type="organism name" value="human"/>
</dbReference>
<dbReference type="AGR" id="HGNC:32528"/>
<dbReference type="CTD" id="768206"/>
<dbReference type="DisGeNET" id="768206"/>
<dbReference type="GeneCards" id="PRCD"/>
<dbReference type="GeneReviews" id="PRCD"/>
<dbReference type="HGNC" id="HGNC:32528">
    <property type="gene designation" value="PRCD"/>
</dbReference>
<dbReference type="HPA" id="ENSG00000214140">
    <property type="expression patterns" value="Tissue enriched (retina)"/>
</dbReference>
<dbReference type="MalaCards" id="PRCD"/>
<dbReference type="MIM" id="610598">
    <property type="type" value="gene"/>
</dbReference>
<dbReference type="MIM" id="610599">
    <property type="type" value="phenotype"/>
</dbReference>
<dbReference type="neXtProt" id="NX_Q00LT1"/>
<dbReference type="OpenTargets" id="ENSG00000214140"/>
<dbReference type="Orphanet" id="791">
    <property type="disease" value="Retinitis pigmentosa"/>
</dbReference>
<dbReference type="PharmGKB" id="PA162400025"/>
<dbReference type="VEuPathDB" id="HostDB:ENSG00000214140"/>
<dbReference type="eggNOG" id="ENOG502TE0N">
    <property type="taxonomic scope" value="Eukaryota"/>
</dbReference>
<dbReference type="GeneTree" id="ENSGT00520000058096"/>
<dbReference type="HOGENOM" id="CLU_3175255_0_0_1"/>
<dbReference type="InParanoid" id="Q00LT1"/>
<dbReference type="OMA" id="CRRRFAN"/>
<dbReference type="OrthoDB" id="9609893at2759"/>
<dbReference type="PAN-GO" id="Q00LT1">
    <property type="GO annotations" value="2 GO annotations based on evolutionary models"/>
</dbReference>
<dbReference type="PhylomeDB" id="Q00LT1"/>
<dbReference type="PathwayCommons" id="Q00LT1"/>
<dbReference type="BioGRID-ORCS" id="768206">
    <property type="hits" value="10 hits in 1130 CRISPR screens"/>
</dbReference>
<dbReference type="GenomeRNAi" id="768206"/>
<dbReference type="Pharos" id="Q00LT1">
    <property type="development level" value="Tdark"/>
</dbReference>
<dbReference type="PRO" id="PR:Q00LT1"/>
<dbReference type="Proteomes" id="UP000005640">
    <property type="component" value="Chromosome 17"/>
</dbReference>
<dbReference type="RNAct" id="Q00LT1">
    <property type="molecule type" value="protein"/>
</dbReference>
<dbReference type="Bgee" id="ENSG00000214140">
    <property type="expression patterns" value="Expressed in right hemisphere of cerebellum and 131 other cell types or tissues"/>
</dbReference>
<dbReference type="GO" id="GO:0005737">
    <property type="term" value="C:cytoplasm"/>
    <property type="evidence" value="ECO:0000314"/>
    <property type="project" value="UniProtKB"/>
</dbReference>
<dbReference type="GO" id="GO:0005783">
    <property type="term" value="C:endoplasmic reticulum"/>
    <property type="evidence" value="ECO:0000314"/>
    <property type="project" value="UniProtKB"/>
</dbReference>
<dbReference type="GO" id="GO:0005576">
    <property type="term" value="C:extracellular region"/>
    <property type="evidence" value="ECO:0000314"/>
    <property type="project" value="UniProtKB"/>
</dbReference>
<dbReference type="GO" id="GO:0005794">
    <property type="term" value="C:Golgi apparatus"/>
    <property type="evidence" value="ECO:0000314"/>
    <property type="project" value="UniProtKB"/>
</dbReference>
<dbReference type="GO" id="GO:0042622">
    <property type="term" value="C:photoreceptor outer segment membrane"/>
    <property type="evidence" value="ECO:0000314"/>
    <property type="project" value="UniProtKB"/>
</dbReference>
<dbReference type="GO" id="GO:0002046">
    <property type="term" value="F:opsin binding"/>
    <property type="evidence" value="ECO:0000318"/>
    <property type="project" value="GO_Central"/>
</dbReference>
<dbReference type="GO" id="GO:0007601">
    <property type="term" value="P:visual perception"/>
    <property type="evidence" value="ECO:0007669"/>
    <property type="project" value="UniProtKB-KW"/>
</dbReference>
<dbReference type="InterPro" id="IPR027937">
    <property type="entry name" value="PRCD"/>
</dbReference>
<dbReference type="PANTHER" id="PTHR38501">
    <property type="entry name" value="PHOTORECEPTOR DISK COMPONENT PRCD"/>
    <property type="match status" value="1"/>
</dbReference>
<dbReference type="PANTHER" id="PTHR38501:SF1">
    <property type="entry name" value="PHOTORECEPTOR DISK COMPONENT PRCD"/>
    <property type="match status" value="1"/>
</dbReference>
<dbReference type="Pfam" id="PF15201">
    <property type="entry name" value="Rod_cone_degen"/>
    <property type="match status" value="1"/>
</dbReference>